<keyword id="KW-0025">Alternative splicing</keyword>
<keyword id="KW-0217">Developmental protein</keyword>
<keyword id="KW-0238">DNA-binding</keyword>
<keyword id="KW-0539">Nucleus</keyword>
<keyword id="KW-1185">Reference proteome</keyword>
<keyword id="KW-0804">Transcription</keyword>
<keyword id="KW-0805">Transcription regulation</keyword>
<protein>
    <recommendedName>
        <fullName>MYB-like transcription factor ETC3</fullName>
    </recommendedName>
    <alternativeName>
        <fullName>Protein CAPRICE-like MYB3</fullName>
    </alternativeName>
    <alternativeName>
        <fullName>Protein ENHANCER OF TRY AND CPC 3</fullName>
    </alternativeName>
</protein>
<name>ETC3_ARATH</name>
<gene>
    <name type="primary">ETC3</name>
    <name type="synonym">CPL3</name>
    <name type="ordered locus">At4g01060</name>
    <name type="ORF">F2N1.40</name>
</gene>
<reference key="1">
    <citation type="submission" date="2004-01" db="EMBL/GenBank/DDBJ databases">
        <title>The MYB transcription factor family in Arabidopsis: a genome-wide cloning and expression pattern analysis.</title>
        <authorList>
            <person name="Qu L."/>
            <person name="Gu H."/>
        </authorList>
    </citation>
    <scope>NUCLEOTIDE SEQUENCE [MRNA] (ISOFORM 1)</scope>
</reference>
<reference key="2">
    <citation type="submission" date="2006-06" db="EMBL/GenBank/DDBJ databases">
        <title>Small Myb is involved in the determination of epidermal cell fate.</title>
        <authorList>
            <person name="Tominaga R."/>
            <person name="Wada T."/>
        </authorList>
    </citation>
    <scope>NUCLEOTIDE SEQUENCE [MRNA] (ISOFORM 2)</scope>
    <source>
        <strain>cv. Columbia</strain>
    </source>
</reference>
<reference key="3">
    <citation type="journal article" date="1999" name="Nature">
        <title>Sequence and analysis of chromosome 4 of the plant Arabidopsis thaliana.</title>
        <authorList>
            <person name="Mayer K.F.X."/>
            <person name="Schueller C."/>
            <person name="Wambutt R."/>
            <person name="Murphy G."/>
            <person name="Volckaert G."/>
            <person name="Pohl T."/>
            <person name="Duesterhoeft A."/>
            <person name="Stiekema W."/>
            <person name="Entian K.-D."/>
            <person name="Terryn N."/>
            <person name="Harris B."/>
            <person name="Ansorge W."/>
            <person name="Brandt P."/>
            <person name="Grivell L.A."/>
            <person name="Rieger M."/>
            <person name="Weichselgartner M."/>
            <person name="de Simone V."/>
            <person name="Obermaier B."/>
            <person name="Mache R."/>
            <person name="Mueller M."/>
            <person name="Kreis M."/>
            <person name="Delseny M."/>
            <person name="Puigdomenech P."/>
            <person name="Watson M."/>
            <person name="Schmidtheini T."/>
            <person name="Reichert B."/>
            <person name="Portetelle D."/>
            <person name="Perez-Alonso M."/>
            <person name="Boutry M."/>
            <person name="Bancroft I."/>
            <person name="Vos P."/>
            <person name="Hoheisel J."/>
            <person name="Zimmermann W."/>
            <person name="Wedler H."/>
            <person name="Ridley P."/>
            <person name="Langham S.-A."/>
            <person name="McCullagh B."/>
            <person name="Bilham L."/>
            <person name="Robben J."/>
            <person name="van der Schueren J."/>
            <person name="Grymonprez B."/>
            <person name="Chuang Y.-J."/>
            <person name="Vandenbussche F."/>
            <person name="Braeken M."/>
            <person name="Weltjens I."/>
            <person name="Voet M."/>
            <person name="Bastiaens I."/>
            <person name="Aert R."/>
            <person name="Defoor E."/>
            <person name="Weitzenegger T."/>
            <person name="Bothe G."/>
            <person name="Ramsperger U."/>
            <person name="Hilbert H."/>
            <person name="Braun M."/>
            <person name="Holzer E."/>
            <person name="Brandt A."/>
            <person name="Peters S."/>
            <person name="van Staveren M."/>
            <person name="Dirkse W."/>
            <person name="Mooijman P."/>
            <person name="Klein Lankhorst R."/>
            <person name="Rose M."/>
            <person name="Hauf J."/>
            <person name="Koetter P."/>
            <person name="Berneiser S."/>
            <person name="Hempel S."/>
            <person name="Feldpausch M."/>
            <person name="Lamberth S."/>
            <person name="Van den Daele H."/>
            <person name="De Keyser A."/>
            <person name="Buysshaert C."/>
            <person name="Gielen J."/>
            <person name="Villarroel R."/>
            <person name="De Clercq R."/>
            <person name="van Montagu M."/>
            <person name="Rogers J."/>
            <person name="Cronin A."/>
            <person name="Quail M.A."/>
            <person name="Bray-Allen S."/>
            <person name="Clark L."/>
            <person name="Doggett J."/>
            <person name="Hall S."/>
            <person name="Kay M."/>
            <person name="Lennard N."/>
            <person name="McLay K."/>
            <person name="Mayes R."/>
            <person name="Pettett A."/>
            <person name="Rajandream M.A."/>
            <person name="Lyne M."/>
            <person name="Benes V."/>
            <person name="Rechmann S."/>
            <person name="Borkova D."/>
            <person name="Bloecker H."/>
            <person name="Scharfe M."/>
            <person name="Grimm M."/>
            <person name="Loehnert T.-H."/>
            <person name="Dose S."/>
            <person name="de Haan M."/>
            <person name="Maarse A.C."/>
            <person name="Schaefer M."/>
            <person name="Mueller-Auer S."/>
            <person name="Gabel C."/>
            <person name="Fuchs M."/>
            <person name="Fartmann B."/>
            <person name="Granderath K."/>
            <person name="Dauner D."/>
            <person name="Herzl A."/>
            <person name="Neumann S."/>
            <person name="Argiriou A."/>
            <person name="Vitale D."/>
            <person name="Liguori R."/>
            <person name="Piravandi E."/>
            <person name="Massenet O."/>
            <person name="Quigley F."/>
            <person name="Clabauld G."/>
            <person name="Muendlein A."/>
            <person name="Felber R."/>
            <person name="Schnabl S."/>
            <person name="Hiller R."/>
            <person name="Schmidt W."/>
            <person name="Lecharny A."/>
            <person name="Aubourg S."/>
            <person name="Chefdor F."/>
            <person name="Cooke R."/>
            <person name="Berger C."/>
            <person name="Monfort A."/>
            <person name="Casacuberta E."/>
            <person name="Gibbons T."/>
            <person name="Weber N."/>
            <person name="Vandenbol M."/>
            <person name="Bargues M."/>
            <person name="Terol J."/>
            <person name="Torres A."/>
            <person name="Perez-Perez A."/>
            <person name="Purnelle B."/>
            <person name="Bent E."/>
            <person name="Johnson S."/>
            <person name="Tacon D."/>
            <person name="Jesse T."/>
            <person name="Heijnen L."/>
            <person name="Schwarz S."/>
            <person name="Scholler P."/>
            <person name="Heber S."/>
            <person name="Francs P."/>
            <person name="Bielke C."/>
            <person name="Frishman D."/>
            <person name="Haase D."/>
            <person name="Lemcke K."/>
            <person name="Mewes H.-W."/>
            <person name="Stocker S."/>
            <person name="Zaccaria P."/>
            <person name="Bevan M."/>
            <person name="Wilson R.K."/>
            <person name="de la Bastide M."/>
            <person name="Habermann K."/>
            <person name="Parnell L."/>
            <person name="Dedhia N."/>
            <person name="Gnoj L."/>
            <person name="Schutz K."/>
            <person name="Huang E."/>
            <person name="Spiegel L."/>
            <person name="Sekhon M."/>
            <person name="Murray J."/>
            <person name="Sheet P."/>
            <person name="Cordes M."/>
            <person name="Abu-Threideh J."/>
            <person name="Stoneking T."/>
            <person name="Kalicki J."/>
            <person name="Graves T."/>
            <person name="Harmon G."/>
            <person name="Edwards J."/>
            <person name="Latreille P."/>
            <person name="Courtney L."/>
            <person name="Cloud J."/>
            <person name="Abbott A."/>
            <person name="Scott K."/>
            <person name="Johnson D."/>
            <person name="Minx P."/>
            <person name="Bentley D."/>
            <person name="Fulton B."/>
            <person name="Miller N."/>
            <person name="Greco T."/>
            <person name="Kemp K."/>
            <person name="Kramer J."/>
            <person name="Fulton L."/>
            <person name="Mardis E."/>
            <person name="Dante M."/>
            <person name="Pepin K."/>
            <person name="Hillier L.W."/>
            <person name="Nelson J."/>
            <person name="Spieth J."/>
            <person name="Ryan E."/>
            <person name="Andrews S."/>
            <person name="Geisel C."/>
            <person name="Layman D."/>
            <person name="Du H."/>
            <person name="Ali J."/>
            <person name="Berghoff A."/>
            <person name="Jones K."/>
            <person name="Drone K."/>
            <person name="Cotton M."/>
            <person name="Joshu C."/>
            <person name="Antonoiu B."/>
            <person name="Zidanic M."/>
            <person name="Strong C."/>
            <person name="Sun H."/>
            <person name="Lamar B."/>
            <person name="Yordan C."/>
            <person name="Ma P."/>
            <person name="Zhong J."/>
            <person name="Preston R."/>
            <person name="Vil D."/>
            <person name="Shekher M."/>
            <person name="Matero A."/>
            <person name="Shah R."/>
            <person name="Swaby I.K."/>
            <person name="O'Shaughnessy A."/>
            <person name="Rodriguez M."/>
            <person name="Hoffman J."/>
            <person name="Till S."/>
            <person name="Granat S."/>
            <person name="Shohdy N."/>
            <person name="Hasegawa A."/>
            <person name="Hameed A."/>
            <person name="Lodhi M."/>
            <person name="Johnson A."/>
            <person name="Chen E."/>
            <person name="Marra M.A."/>
            <person name="Martienssen R."/>
            <person name="McCombie W.R."/>
        </authorList>
    </citation>
    <scope>NUCLEOTIDE SEQUENCE [LARGE SCALE GENOMIC DNA]</scope>
    <source>
        <strain>cv. Columbia</strain>
    </source>
</reference>
<reference key="4">
    <citation type="journal article" date="2017" name="Plant J.">
        <title>Araport11: a complete reannotation of the Arabidopsis thaliana reference genome.</title>
        <authorList>
            <person name="Cheng C.Y."/>
            <person name="Krishnakumar V."/>
            <person name="Chan A.P."/>
            <person name="Thibaud-Nissen F."/>
            <person name="Schobel S."/>
            <person name="Town C.D."/>
        </authorList>
    </citation>
    <scope>GENOME REANNOTATION</scope>
    <source>
        <strain>cv. Columbia</strain>
    </source>
</reference>
<reference key="5">
    <citation type="journal article" date="2002" name="Science">
        <title>Functional annotation of a full-length Arabidopsis cDNA collection.</title>
        <authorList>
            <person name="Seki M."/>
            <person name="Narusaka M."/>
            <person name="Kamiya A."/>
            <person name="Ishida J."/>
            <person name="Satou M."/>
            <person name="Sakurai T."/>
            <person name="Nakajima M."/>
            <person name="Enju A."/>
            <person name="Akiyama K."/>
            <person name="Oono Y."/>
            <person name="Muramatsu M."/>
            <person name="Hayashizaki Y."/>
            <person name="Kawai J."/>
            <person name="Carninci P."/>
            <person name="Itoh M."/>
            <person name="Ishii Y."/>
            <person name="Arakawa T."/>
            <person name="Shibata K."/>
            <person name="Shinagawa A."/>
            <person name="Shinozaki K."/>
        </authorList>
    </citation>
    <scope>NUCLEOTIDE SEQUENCE [LARGE SCALE MRNA] (ISOFORM 2)</scope>
    <source>
        <strain>cv. Columbia</strain>
    </source>
</reference>
<reference key="6">
    <citation type="journal article" date="2003" name="Science">
        <title>Empirical analysis of transcriptional activity in the Arabidopsis genome.</title>
        <authorList>
            <person name="Yamada K."/>
            <person name="Lim J."/>
            <person name="Dale J.M."/>
            <person name="Chen H."/>
            <person name="Shinn P."/>
            <person name="Palm C.J."/>
            <person name="Southwick A.M."/>
            <person name="Wu H.C."/>
            <person name="Kim C.J."/>
            <person name="Nguyen M."/>
            <person name="Pham P.K."/>
            <person name="Cheuk R.F."/>
            <person name="Karlin-Newmann G."/>
            <person name="Liu S.X."/>
            <person name="Lam B."/>
            <person name="Sakano H."/>
            <person name="Wu T."/>
            <person name="Yu G."/>
            <person name="Miranda M."/>
            <person name="Quach H.L."/>
            <person name="Tripp M."/>
            <person name="Chang C.H."/>
            <person name="Lee J.M."/>
            <person name="Toriumi M.J."/>
            <person name="Chan M.M."/>
            <person name="Tang C.C."/>
            <person name="Onodera C.S."/>
            <person name="Deng J.M."/>
            <person name="Akiyama K."/>
            <person name="Ansari Y."/>
            <person name="Arakawa T."/>
            <person name="Banh J."/>
            <person name="Banno F."/>
            <person name="Bowser L."/>
            <person name="Brooks S.Y."/>
            <person name="Carninci P."/>
            <person name="Chao Q."/>
            <person name="Choy N."/>
            <person name="Enju A."/>
            <person name="Goldsmith A.D."/>
            <person name="Gurjal M."/>
            <person name="Hansen N.F."/>
            <person name="Hayashizaki Y."/>
            <person name="Johnson-Hopson C."/>
            <person name="Hsuan V.W."/>
            <person name="Iida K."/>
            <person name="Karnes M."/>
            <person name="Khan S."/>
            <person name="Koesema E."/>
            <person name="Ishida J."/>
            <person name="Jiang P.X."/>
            <person name="Jones T."/>
            <person name="Kawai J."/>
            <person name="Kamiya A."/>
            <person name="Meyers C."/>
            <person name="Nakajima M."/>
            <person name="Narusaka M."/>
            <person name="Seki M."/>
            <person name="Sakurai T."/>
            <person name="Satou M."/>
            <person name="Tamse R."/>
            <person name="Vaysberg M."/>
            <person name="Wallender E.K."/>
            <person name="Wong C."/>
            <person name="Yamamura Y."/>
            <person name="Yuan S."/>
            <person name="Shinozaki K."/>
            <person name="Davis R.W."/>
            <person name="Theologis A."/>
            <person name="Ecker J.R."/>
        </authorList>
    </citation>
    <scope>NUCLEOTIDE SEQUENCE [LARGE SCALE MRNA] (ISOFORM 2)</scope>
    <source>
        <strain>cv. Columbia</strain>
    </source>
</reference>
<reference key="7">
    <citation type="journal article" date="2008" name="Development">
        <title>Arabidopsis CAPRICE-LIKE MYB 3 (CPL3) controls endoreduplication and flowering development in addition to trichome and root hair formation.</title>
        <authorList>
            <person name="Tominaga R."/>
            <person name="Iwata M."/>
            <person name="Sano R."/>
            <person name="Inoue K."/>
            <person name="Okada K."/>
            <person name="Wada T."/>
        </authorList>
    </citation>
    <scope>FUNCTION</scope>
    <scope>TISSUE SPECIFICITY</scope>
    <scope>DISRUPTION PHENOTYPE</scope>
</reference>
<accession>Q9M157</accession>
<accession>Q8GXU0</accession>
<organism>
    <name type="scientific">Arabidopsis thaliana</name>
    <name type="common">Mouse-ear cress</name>
    <dbReference type="NCBI Taxonomy" id="3702"/>
    <lineage>
        <taxon>Eukaryota</taxon>
        <taxon>Viridiplantae</taxon>
        <taxon>Streptophyta</taxon>
        <taxon>Embryophyta</taxon>
        <taxon>Tracheophyta</taxon>
        <taxon>Spermatophyta</taxon>
        <taxon>Magnoliopsida</taxon>
        <taxon>eudicotyledons</taxon>
        <taxon>Gunneridae</taxon>
        <taxon>Pentapetalae</taxon>
        <taxon>rosids</taxon>
        <taxon>malvids</taxon>
        <taxon>Brassicales</taxon>
        <taxon>Brassicaceae</taxon>
        <taxon>Camelineae</taxon>
        <taxon>Arabidopsis</taxon>
    </lineage>
</organism>
<comment type="function">
    <text evidence="4">MYB-type transcription factor involved in epidermal cell fate specification. Acts as a negative regulator of trichome development, including endoreplication, by mediating lateral inhibition. Promotes the formation of hair developing cells in H position in root epidermis, probably by inhibiting non-hair cell formation. May have pleiotropic effects on flowering development and epidermal cell size through the regulation of endoreduplication.</text>
</comment>
<comment type="subcellular location">
    <subcellularLocation>
        <location evidence="1">Nucleus</location>
    </subcellularLocation>
</comment>
<comment type="alternative products">
    <event type="alternative splicing"/>
    <isoform>
        <id>Q9M157-1</id>
        <name>1</name>
        <sequence type="displayed"/>
    </isoform>
    <isoform>
        <id>Q9M157-2</id>
        <name>2</name>
        <sequence type="described" ref="VSP_047516"/>
    </isoform>
</comment>
<comment type="tissue specificity">
    <text evidence="4">Expressed in leaf epidermal cells, stomate guard cells in leaves, cotyledons and hypocotyls, inflorescences, developing seeds and siliques.</text>
</comment>
<comment type="disruption phenotype">
    <text evidence="4">Increased number or trichomes and reduced number of root hairs.</text>
</comment>
<comment type="miscellaneous">
    <text evidence="8">Overexpression of ETC3 results in the suppression of trichomes and overproduction of root hairs, as observed for CPC, TRY, ETC1 and ETC2.</text>
</comment>
<dbReference type="EMBL" id="AY519522">
    <property type="protein sequence ID" value="AAS09992.1"/>
    <property type="molecule type" value="mRNA"/>
</dbReference>
<dbReference type="EMBL" id="AB264292">
    <property type="protein sequence ID" value="BAF43577.1"/>
    <property type="molecule type" value="mRNA"/>
</dbReference>
<dbReference type="EMBL" id="AL161491">
    <property type="protein sequence ID" value="CAB80915.1"/>
    <property type="molecule type" value="Genomic_DNA"/>
</dbReference>
<dbReference type="EMBL" id="CP002687">
    <property type="protein sequence ID" value="AEE81974.1"/>
    <property type="molecule type" value="Genomic_DNA"/>
</dbReference>
<dbReference type="EMBL" id="CP002687">
    <property type="protein sequence ID" value="AEE81976.1"/>
    <property type="molecule type" value="Genomic_DNA"/>
</dbReference>
<dbReference type="EMBL" id="AK118043">
    <property type="protein sequence ID" value="BAC42674.1"/>
    <property type="molecule type" value="mRNA"/>
</dbReference>
<dbReference type="EMBL" id="BT005611">
    <property type="protein sequence ID" value="AAO64031.1"/>
    <property type="molecule type" value="mRNA"/>
</dbReference>
<dbReference type="PIR" id="A85014">
    <property type="entry name" value="A85014"/>
</dbReference>
<dbReference type="RefSeq" id="NP_001031567.1">
    <molecule id="Q9M157-1"/>
    <property type="nucleotide sequence ID" value="NM_001036490.2"/>
</dbReference>
<dbReference type="RefSeq" id="NP_192015.2">
    <molecule id="Q9M157-2"/>
    <property type="nucleotide sequence ID" value="NM_116336.4"/>
</dbReference>
<dbReference type="SMR" id="Q9M157"/>
<dbReference type="BioGRID" id="13208">
    <property type="interactions" value="9"/>
</dbReference>
<dbReference type="FunCoup" id="Q9M157">
    <property type="interactions" value="7"/>
</dbReference>
<dbReference type="IntAct" id="Q9M157">
    <property type="interactions" value="9"/>
</dbReference>
<dbReference type="STRING" id="3702.Q9M157"/>
<dbReference type="PaxDb" id="3702-AT4G01060.1"/>
<dbReference type="EnsemblPlants" id="AT4G01060.1">
    <molecule id="Q9M157-2"/>
    <property type="protein sequence ID" value="AT4G01060.1"/>
    <property type="gene ID" value="AT4G01060"/>
</dbReference>
<dbReference type="EnsemblPlants" id="AT4G01060.3">
    <molecule id="Q9M157-1"/>
    <property type="protein sequence ID" value="AT4G01060.3"/>
    <property type="gene ID" value="AT4G01060"/>
</dbReference>
<dbReference type="GeneID" id="827917"/>
<dbReference type="Gramene" id="AT4G01060.1">
    <molecule id="Q9M157-2"/>
    <property type="protein sequence ID" value="AT4G01060.1"/>
    <property type="gene ID" value="AT4G01060"/>
</dbReference>
<dbReference type="Gramene" id="AT4G01060.3">
    <molecule id="Q9M157-1"/>
    <property type="protein sequence ID" value="AT4G01060.3"/>
    <property type="gene ID" value="AT4G01060"/>
</dbReference>
<dbReference type="KEGG" id="ath:AT4G01060"/>
<dbReference type="Araport" id="AT4G01060"/>
<dbReference type="TAIR" id="AT4G01060">
    <property type="gene designation" value="CPL3"/>
</dbReference>
<dbReference type="InParanoid" id="Q9M157"/>
<dbReference type="OMA" id="MENHLMT"/>
<dbReference type="PhylomeDB" id="Q9M157"/>
<dbReference type="PRO" id="PR:Q9M157"/>
<dbReference type="Proteomes" id="UP000006548">
    <property type="component" value="Chromosome 4"/>
</dbReference>
<dbReference type="ExpressionAtlas" id="Q9M157">
    <property type="expression patterns" value="baseline and differential"/>
</dbReference>
<dbReference type="GO" id="GO:0005634">
    <property type="term" value="C:nucleus"/>
    <property type="evidence" value="ECO:0007669"/>
    <property type="project" value="UniProtKB-SubCell"/>
</dbReference>
<dbReference type="GO" id="GO:0003677">
    <property type="term" value="F:DNA binding"/>
    <property type="evidence" value="ECO:0007669"/>
    <property type="project" value="UniProtKB-KW"/>
</dbReference>
<dbReference type="GO" id="GO:0003700">
    <property type="term" value="F:DNA-binding transcription factor activity"/>
    <property type="evidence" value="ECO:0000250"/>
    <property type="project" value="TAIR"/>
</dbReference>
<dbReference type="GO" id="GO:0048765">
    <property type="term" value="P:root hair cell differentiation"/>
    <property type="evidence" value="ECO:0000315"/>
    <property type="project" value="TAIR"/>
</dbReference>
<dbReference type="GO" id="GO:0010026">
    <property type="term" value="P:trichome differentiation"/>
    <property type="evidence" value="ECO:0000315"/>
    <property type="project" value="TAIR"/>
</dbReference>
<dbReference type="GO" id="GO:0010228">
    <property type="term" value="P:vegetative to reproductive phase transition of meristem"/>
    <property type="evidence" value="ECO:0000315"/>
    <property type="project" value="TAIR"/>
</dbReference>
<dbReference type="CDD" id="cd00167">
    <property type="entry name" value="SANT"/>
    <property type="match status" value="1"/>
</dbReference>
<dbReference type="FunFam" id="1.10.10.60:FF:000160">
    <property type="entry name" value="MYB-like transcription factor"/>
    <property type="match status" value="1"/>
</dbReference>
<dbReference type="Gene3D" id="1.10.10.60">
    <property type="entry name" value="Homeodomain-like"/>
    <property type="match status" value="1"/>
</dbReference>
<dbReference type="InterPro" id="IPR009057">
    <property type="entry name" value="Homeodomain-like_sf"/>
</dbReference>
<dbReference type="InterPro" id="IPR015495">
    <property type="entry name" value="Myb_TF_plants"/>
</dbReference>
<dbReference type="InterPro" id="IPR001005">
    <property type="entry name" value="SANT/Myb"/>
</dbReference>
<dbReference type="PANTHER" id="PTHR47998:SF48">
    <property type="entry name" value="MYB-LIKE TRANSCRIPTION FACTOR ETC3"/>
    <property type="match status" value="1"/>
</dbReference>
<dbReference type="PANTHER" id="PTHR47998">
    <property type="entry name" value="TRANSCRIPTION FACTOR MYB51-LIKE ISOFORM X1"/>
    <property type="match status" value="1"/>
</dbReference>
<dbReference type="Pfam" id="PF00249">
    <property type="entry name" value="Myb_DNA-binding"/>
    <property type="match status" value="1"/>
</dbReference>
<dbReference type="SMART" id="SM00717">
    <property type="entry name" value="SANT"/>
    <property type="match status" value="1"/>
</dbReference>
<dbReference type="SUPFAM" id="SSF46689">
    <property type="entry name" value="Homeodomain-like"/>
    <property type="match status" value="1"/>
</dbReference>
<dbReference type="PROSITE" id="PS50090">
    <property type="entry name" value="MYB_LIKE"/>
    <property type="match status" value="1"/>
</dbReference>
<evidence type="ECO:0000250" key="1"/>
<evidence type="ECO:0000255" key="2">
    <source>
        <dbReference type="PROSITE-ProRule" id="PRU00133"/>
    </source>
</evidence>
<evidence type="ECO:0000256" key="3">
    <source>
        <dbReference type="SAM" id="MobiDB-lite"/>
    </source>
</evidence>
<evidence type="ECO:0000269" key="4">
    <source>
    </source>
</evidence>
<evidence type="ECO:0000303" key="5">
    <source>
    </source>
</evidence>
<evidence type="ECO:0000303" key="6">
    <source>
    </source>
</evidence>
<evidence type="ECO:0000303" key="7">
    <source ref="2"/>
</evidence>
<evidence type="ECO:0000305" key="8">
    <source>
    </source>
</evidence>
<sequence>MDNHRRTKQPKTNSIVTSSSEEVSSLEWEVVNMSQEEEDLVSRMHKLVGDRWELIAGRIPGRTAGEIERFWVMKN</sequence>
<proteinExistence type="evidence at transcript level"/>
<feature type="chain" id="PRO_0000423054" description="MYB-like transcription factor ETC3">
    <location>
        <begin position="1"/>
        <end position="75"/>
    </location>
</feature>
<feature type="domain" description="Myb-like" evidence="2">
    <location>
        <begin position="34"/>
        <end position="71"/>
    </location>
</feature>
<feature type="region of interest" description="Disordered" evidence="3">
    <location>
        <begin position="1"/>
        <end position="20"/>
    </location>
</feature>
<feature type="splice variant" id="VSP_047516" description="In isoform 2." evidence="5 6 7">
    <original>E</original>
    <variation>EGT</variation>
    <location>
        <position position="21"/>
    </location>
</feature>